<comment type="function">
    <text evidence="1">One of the primary rRNA binding proteins. Required for association of the 30S and 50S subunits to form the 70S ribosome, for tRNA binding and peptide bond formation. It has been suggested to have peptidyltransferase activity; this is somewhat controversial. Makes several contacts with the 16S rRNA in the 70S ribosome.</text>
</comment>
<comment type="subunit">
    <text evidence="1">Part of the 50S ribosomal subunit. Forms a bridge to the 30S subunit in the 70S ribosome.</text>
</comment>
<comment type="similarity">
    <text evidence="1">Belongs to the universal ribosomal protein uL2 family.</text>
</comment>
<dbReference type="EMBL" id="CP000082">
    <property type="protein sequence ID" value="AAZ18355.1"/>
    <property type="molecule type" value="Genomic_DNA"/>
</dbReference>
<dbReference type="RefSeq" id="WP_011279790.1">
    <property type="nucleotide sequence ID" value="NC_007204.1"/>
</dbReference>
<dbReference type="SMR" id="Q4FUF3"/>
<dbReference type="STRING" id="259536.Psyc_0492"/>
<dbReference type="KEGG" id="par:Psyc_0492"/>
<dbReference type="eggNOG" id="COG0090">
    <property type="taxonomic scope" value="Bacteria"/>
</dbReference>
<dbReference type="HOGENOM" id="CLU_036235_2_1_6"/>
<dbReference type="OrthoDB" id="9778722at2"/>
<dbReference type="Proteomes" id="UP000000546">
    <property type="component" value="Chromosome"/>
</dbReference>
<dbReference type="GO" id="GO:0015934">
    <property type="term" value="C:large ribosomal subunit"/>
    <property type="evidence" value="ECO:0007669"/>
    <property type="project" value="InterPro"/>
</dbReference>
<dbReference type="GO" id="GO:0019843">
    <property type="term" value="F:rRNA binding"/>
    <property type="evidence" value="ECO:0007669"/>
    <property type="project" value="UniProtKB-UniRule"/>
</dbReference>
<dbReference type="GO" id="GO:0003735">
    <property type="term" value="F:structural constituent of ribosome"/>
    <property type="evidence" value="ECO:0007669"/>
    <property type="project" value="InterPro"/>
</dbReference>
<dbReference type="GO" id="GO:0016740">
    <property type="term" value="F:transferase activity"/>
    <property type="evidence" value="ECO:0007669"/>
    <property type="project" value="InterPro"/>
</dbReference>
<dbReference type="GO" id="GO:0002181">
    <property type="term" value="P:cytoplasmic translation"/>
    <property type="evidence" value="ECO:0007669"/>
    <property type="project" value="TreeGrafter"/>
</dbReference>
<dbReference type="FunFam" id="2.30.30.30:FF:000001">
    <property type="entry name" value="50S ribosomal protein L2"/>
    <property type="match status" value="1"/>
</dbReference>
<dbReference type="FunFam" id="2.40.50.140:FF:000003">
    <property type="entry name" value="50S ribosomal protein L2"/>
    <property type="match status" value="1"/>
</dbReference>
<dbReference type="FunFam" id="4.10.950.10:FF:000001">
    <property type="entry name" value="50S ribosomal protein L2"/>
    <property type="match status" value="1"/>
</dbReference>
<dbReference type="Gene3D" id="2.30.30.30">
    <property type="match status" value="1"/>
</dbReference>
<dbReference type="Gene3D" id="2.40.50.140">
    <property type="entry name" value="Nucleic acid-binding proteins"/>
    <property type="match status" value="1"/>
</dbReference>
<dbReference type="Gene3D" id="4.10.950.10">
    <property type="entry name" value="Ribosomal protein L2, domain 3"/>
    <property type="match status" value="1"/>
</dbReference>
<dbReference type="HAMAP" id="MF_01320_B">
    <property type="entry name" value="Ribosomal_uL2_B"/>
    <property type="match status" value="1"/>
</dbReference>
<dbReference type="InterPro" id="IPR012340">
    <property type="entry name" value="NA-bd_OB-fold"/>
</dbReference>
<dbReference type="InterPro" id="IPR014722">
    <property type="entry name" value="Rib_uL2_dom2"/>
</dbReference>
<dbReference type="InterPro" id="IPR002171">
    <property type="entry name" value="Ribosomal_uL2"/>
</dbReference>
<dbReference type="InterPro" id="IPR005880">
    <property type="entry name" value="Ribosomal_uL2_bac/org-type"/>
</dbReference>
<dbReference type="InterPro" id="IPR022669">
    <property type="entry name" value="Ribosomal_uL2_C"/>
</dbReference>
<dbReference type="InterPro" id="IPR022671">
    <property type="entry name" value="Ribosomal_uL2_CS"/>
</dbReference>
<dbReference type="InterPro" id="IPR014726">
    <property type="entry name" value="Ribosomal_uL2_dom3"/>
</dbReference>
<dbReference type="InterPro" id="IPR022666">
    <property type="entry name" value="Ribosomal_uL2_RNA-bd_dom"/>
</dbReference>
<dbReference type="InterPro" id="IPR008991">
    <property type="entry name" value="Translation_prot_SH3-like_sf"/>
</dbReference>
<dbReference type="NCBIfam" id="TIGR01171">
    <property type="entry name" value="rplB_bact"/>
    <property type="match status" value="1"/>
</dbReference>
<dbReference type="PANTHER" id="PTHR13691:SF5">
    <property type="entry name" value="LARGE RIBOSOMAL SUBUNIT PROTEIN UL2M"/>
    <property type="match status" value="1"/>
</dbReference>
<dbReference type="PANTHER" id="PTHR13691">
    <property type="entry name" value="RIBOSOMAL PROTEIN L2"/>
    <property type="match status" value="1"/>
</dbReference>
<dbReference type="Pfam" id="PF00181">
    <property type="entry name" value="Ribosomal_L2"/>
    <property type="match status" value="1"/>
</dbReference>
<dbReference type="Pfam" id="PF03947">
    <property type="entry name" value="Ribosomal_L2_C"/>
    <property type="match status" value="1"/>
</dbReference>
<dbReference type="PIRSF" id="PIRSF002158">
    <property type="entry name" value="Ribosomal_L2"/>
    <property type="match status" value="1"/>
</dbReference>
<dbReference type="SMART" id="SM01383">
    <property type="entry name" value="Ribosomal_L2"/>
    <property type="match status" value="1"/>
</dbReference>
<dbReference type="SMART" id="SM01382">
    <property type="entry name" value="Ribosomal_L2_C"/>
    <property type="match status" value="1"/>
</dbReference>
<dbReference type="SUPFAM" id="SSF50249">
    <property type="entry name" value="Nucleic acid-binding proteins"/>
    <property type="match status" value="1"/>
</dbReference>
<dbReference type="SUPFAM" id="SSF50104">
    <property type="entry name" value="Translation proteins SH3-like domain"/>
    <property type="match status" value="1"/>
</dbReference>
<dbReference type="PROSITE" id="PS00467">
    <property type="entry name" value="RIBOSOMAL_L2"/>
    <property type="match status" value="1"/>
</dbReference>
<proteinExistence type="inferred from homology"/>
<organism>
    <name type="scientific">Psychrobacter arcticus (strain DSM 17307 / VKM B-2377 / 273-4)</name>
    <dbReference type="NCBI Taxonomy" id="259536"/>
    <lineage>
        <taxon>Bacteria</taxon>
        <taxon>Pseudomonadati</taxon>
        <taxon>Pseudomonadota</taxon>
        <taxon>Gammaproteobacteria</taxon>
        <taxon>Moraxellales</taxon>
        <taxon>Moraxellaceae</taxon>
        <taxon>Psychrobacter</taxon>
    </lineage>
</organism>
<sequence length="275" mass="30399">MPIVRAKPTSPGRRFVEKVVHPHLYKGRPFAALLESKSKTGGRNNNGRITTRHIGGGHKQHYRIIDFKRTKDNIPATVERIEYDPNRTAHIALLKYADGERRYIIAAKKQAVGDTVMSGELSPIRPGNCLPLKNIPLGTVIHNIELKIGKGAQMARAAGASVQLLGRDGIYAILRLRSGETRRVHVNCRAVIGEVSNTENNLKSLGKAGASRWRGIRPSVRGVAMNPVDHPHGGGEGRNKGRHPTSPWGQKSKGLKTRNNKRTDSMIIRRRAKKK</sequence>
<accession>Q4FUF3</accession>
<evidence type="ECO:0000255" key="1">
    <source>
        <dbReference type="HAMAP-Rule" id="MF_01320"/>
    </source>
</evidence>
<evidence type="ECO:0000256" key="2">
    <source>
        <dbReference type="SAM" id="MobiDB-lite"/>
    </source>
</evidence>
<evidence type="ECO:0000305" key="3"/>
<gene>
    <name evidence="1" type="primary">rplB</name>
    <name type="ordered locus">Psyc_0492</name>
</gene>
<protein>
    <recommendedName>
        <fullName evidence="1">Large ribosomal subunit protein uL2</fullName>
    </recommendedName>
    <alternativeName>
        <fullName evidence="3">50S ribosomal protein L2</fullName>
    </alternativeName>
</protein>
<feature type="chain" id="PRO_0000237231" description="Large ribosomal subunit protein uL2">
    <location>
        <begin position="1"/>
        <end position="275"/>
    </location>
</feature>
<feature type="region of interest" description="Disordered" evidence="2">
    <location>
        <begin position="222"/>
        <end position="275"/>
    </location>
</feature>
<feature type="compositionally biased region" description="Basic and acidic residues" evidence="2">
    <location>
        <begin position="229"/>
        <end position="239"/>
    </location>
</feature>
<reference key="1">
    <citation type="journal article" date="2010" name="Appl. Environ. Microbiol.">
        <title>The genome sequence of Psychrobacter arcticus 273-4, a psychroactive Siberian permafrost bacterium, reveals mechanisms for adaptation to low-temperature growth.</title>
        <authorList>
            <person name="Ayala-del-Rio H.L."/>
            <person name="Chain P.S."/>
            <person name="Grzymski J.J."/>
            <person name="Ponder M.A."/>
            <person name="Ivanova N."/>
            <person name="Bergholz P.W."/>
            <person name="Di Bartolo G."/>
            <person name="Hauser L."/>
            <person name="Land M."/>
            <person name="Bakermans C."/>
            <person name="Rodrigues D."/>
            <person name="Klappenbach J."/>
            <person name="Zarka D."/>
            <person name="Larimer F."/>
            <person name="Richardson P."/>
            <person name="Murray A."/>
            <person name="Thomashow M."/>
            <person name="Tiedje J.M."/>
        </authorList>
    </citation>
    <scope>NUCLEOTIDE SEQUENCE [LARGE SCALE GENOMIC DNA]</scope>
    <source>
        <strain>DSM 17307 / VKM B-2377 / 273-4</strain>
    </source>
</reference>
<keyword id="KW-1185">Reference proteome</keyword>
<keyword id="KW-0687">Ribonucleoprotein</keyword>
<keyword id="KW-0689">Ribosomal protein</keyword>
<keyword id="KW-0694">RNA-binding</keyword>
<keyword id="KW-0699">rRNA-binding</keyword>
<name>RL2_PSYA2</name>